<sequence length="60" mass="6991">MAKGKENRIVITLECTEAKKEGKTVSRYTTTKNKKNTTDRLVLKKYNPSMQKHTLHKEIK</sequence>
<comment type="similarity">
    <text evidence="1">Belongs to the bacterial ribosomal protein bL33 family.</text>
</comment>
<accession>A4SE10</accession>
<dbReference type="EMBL" id="CP000607">
    <property type="protein sequence ID" value="ABP36719.1"/>
    <property type="molecule type" value="Genomic_DNA"/>
</dbReference>
<dbReference type="SMR" id="A4SE10"/>
<dbReference type="STRING" id="290318.Cvib_0704"/>
<dbReference type="KEGG" id="pvi:Cvib_0704"/>
<dbReference type="eggNOG" id="COG0267">
    <property type="taxonomic scope" value="Bacteria"/>
</dbReference>
<dbReference type="HOGENOM" id="CLU_190949_3_0_10"/>
<dbReference type="GO" id="GO:0005737">
    <property type="term" value="C:cytoplasm"/>
    <property type="evidence" value="ECO:0007669"/>
    <property type="project" value="UniProtKB-ARBA"/>
</dbReference>
<dbReference type="GO" id="GO:1990904">
    <property type="term" value="C:ribonucleoprotein complex"/>
    <property type="evidence" value="ECO:0007669"/>
    <property type="project" value="UniProtKB-KW"/>
</dbReference>
<dbReference type="GO" id="GO:0005840">
    <property type="term" value="C:ribosome"/>
    <property type="evidence" value="ECO:0007669"/>
    <property type="project" value="UniProtKB-KW"/>
</dbReference>
<dbReference type="GO" id="GO:0003735">
    <property type="term" value="F:structural constituent of ribosome"/>
    <property type="evidence" value="ECO:0007669"/>
    <property type="project" value="InterPro"/>
</dbReference>
<dbReference type="GO" id="GO:0006412">
    <property type="term" value="P:translation"/>
    <property type="evidence" value="ECO:0007669"/>
    <property type="project" value="UniProtKB-UniRule"/>
</dbReference>
<dbReference type="Gene3D" id="2.20.28.120">
    <property type="entry name" value="Ribosomal protein L33"/>
    <property type="match status" value="1"/>
</dbReference>
<dbReference type="HAMAP" id="MF_00294">
    <property type="entry name" value="Ribosomal_bL33"/>
    <property type="match status" value="1"/>
</dbReference>
<dbReference type="InterPro" id="IPR001705">
    <property type="entry name" value="Ribosomal_bL33"/>
</dbReference>
<dbReference type="InterPro" id="IPR038584">
    <property type="entry name" value="Ribosomal_bL33_sf"/>
</dbReference>
<dbReference type="InterPro" id="IPR011332">
    <property type="entry name" value="Ribosomal_zn-bd"/>
</dbReference>
<dbReference type="NCBIfam" id="NF001764">
    <property type="entry name" value="PRK00504.1"/>
    <property type="match status" value="1"/>
</dbReference>
<dbReference type="NCBIfam" id="NF001860">
    <property type="entry name" value="PRK00595.1"/>
    <property type="match status" value="1"/>
</dbReference>
<dbReference type="NCBIfam" id="TIGR01023">
    <property type="entry name" value="rpmG_bact"/>
    <property type="match status" value="1"/>
</dbReference>
<dbReference type="PANTHER" id="PTHR43168">
    <property type="entry name" value="50S RIBOSOMAL PROTEIN L33, CHLOROPLASTIC"/>
    <property type="match status" value="1"/>
</dbReference>
<dbReference type="PANTHER" id="PTHR43168:SF2">
    <property type="entry name" value="LARGE RIBOSOMAL SUBUNIT PROTEIN BL33C"/>
    <property type="match status" value="1"/>
</dbReference>
<dbReference type="Pfam" id="PF00471">
    <property type="entry name" value="Ribosomal_L33"/>
    <property type="match status" value="1"/>
</dbReference>
<dbReference type="SUPFAM" id="SSF57829">
    <property type="entry name" value="Zn-binding ribosomal proteins"/>
    <property type="match status" value="1"/>
</dbReference>
<name>RL33_CHLPM</name>
<gene>
    <name evidence="1" type="primary">rpmG</name>
    <name type="ordered locus">Cvib_0704</name>
</gene>
<evidence type="ECO:0000255" key="1">
    <source>
        <dbReference type="HAMAP-Rule" id="MF_00294"/>
    </source>
</evidence>
<evidence type="ECO:0000305" key="2"/>
<reference key="1">
    <citation type="submission" date="2007-03" db="EMBL/GenBank/DDBJ databases">
        <title>Complete sequence of Prosthecochloris vibrioformis DSM 265.</title>
        <authorList>
            <consortium name="US DOE Joint Genome Institute"/>
            <person name="Copeland A."/>
            <person name="Lucas S."/>
            <person name="Lapidus A."/>
            <person name="Barry K."/>
            <person name="Detter J.C."/>
            <person name="Glavina del Rio T."/>
            <person name="Hammon N."/>
            <person name="Israni S."/>
            <person name="Pitluck S."/>
            <person name="Schmutz J."/>
            <person name="Larimer F."/>
            <person name="Land M."/>
            <person name="Hauser L."/>
            <person name="Mikhailova N."/>
            <person name="Li T."/>
            <person name="Overmann J."/>
            <person name="Schuster S.C."/>
            <person name="Bryant D.A."/>
            <person name="Richardson P."/>
        </authorList>
    </citation>
    <scope>NUCLEOTIDE SEQUENCE [LARGE SCALE GENOMIC DNA]</scope>
    <source>
        <strain>DSM 265 / 1930</strain>
    </source>
</reference>
<keyword id="KW-0687">Ribonucleoprotein</keyword>
<keyword id="KW-0689">Ribosomal protein</keyword>
<protein>
    <recommendedName>
        <fullName evidence="1">Large ribosomal subunit protein bL33</fullName>
    </recommendedName>
    <alternativeName>
        <fullName evidence="2">50S ribosomal protein L33</fullName>
    </alternativeName>
</protein>
<feature type="chain" id="PRO_1000078918" description="Large ribosomal subunit protein bL33">
    <location>
        <begin position="1"/>
        <end position="60"/>
    </location>
</feature>
<proteinExistence type="inferred from homology"/>
<organism>
    <name type="scientific">Chlorobium phaeovibrioides (strain DSM 265 / 1930)</name>
    <name type="common">Prosthecochloris vibrioformis (strain DSM 265)</name>
    <dbReference type="NCBI Taxonomy" id="290318"/>
    <lineage>
        <taxon>Bacteria</taxon>
        <taxon>Pseudomonadati</taxon>
        <taxon>Chlorobiota</taxon>
        <taxon>Chlorobiia</taxon>
        <taxon>Chlorobiales</taxon>
        <taxon>Chlorobiaceae</taxon>
        <taxon>Chlorobium/Pelodictyon group</taxon>
        <taxon>Chlorobium</taxon>
    </lineage>
</organism>